<protein>
    <recommendedName>
        <fullName evidence="1">Cytochrome b559 subunit beta</fullName>
    </recommendedName>
    <alternativeName>
        <fullName evidence="1">PSII reaction center subunit VI</fullName>
    </alternativeName>
</protein>
<evidence type="ECO:0000255" key="1">
    <source>
        <dbReference type="HAMAP-Rule" id="MF_00643"/>
    </source>
</evidence>
<keyword id="KW-0150">Chloroplast</keyword>
<keyword id="KW-0249">Electron transport</keyword>
<keyword id="KW-0349">Heme</keyword>
<keyword id="KW-0408">Iron</keyword>
<keyword id="KW-0472">Membrane</keyword>
<keyword id="KW-0479">Metal-binding</keyword>
<keyword id="KW-0602">Photosynthesis</keyword>
<keyword id="KW-0604">Photosystem II</keyword>
<keyword id="KW-0934">Plastid</keyword>
<keyword id="KW-0793">Thylakoid</keyword>
<keyword id="KW-0812">Transmembrane</keyword>
<keyword id="KW-1133">Transmembrane helix</keyword>
<keyword id="KW-0813">Transport</keyword>
<comment type="function">
    <text evidence="1">This b-type cytochrome is tightly associated with the reaction center of photosystem II (PSII). PSII is a light-driven water:plastoquinone oxidoreductase that uses light energy to abstract electrons from H(2)O, generating O(2) and a proton gradient subsequently used for ATP formation. It consists of a core antenna complex that captures photons, and an electron transfer chain that converts photonic excitation into a charge separation.</text>
</comment>
<comment type="cofactor">
    <cofactor evidence="1">
        <name>heme b</name>
        <dbReference type="ChEBI" id="CHEBI:60344"/>
    </cofactor>
    <text evidence="1">With its partner (PsbE) binds heme. PSII binds additional chlorophylls, carotenoids and specific lipids.</text>
</comment>
<comment type="subunit">
    <text evidence="1">Heterodimer of an alpha subunit and a beta subunit. PSII is composed of 1 copy each of membrane proteins PsbA, PsbB, PsbC, PsbD, PsbE, PsbF, PsbH, PsbI, PsbJ, PsbK, PsbL, PsbM, PsbT, PsbX, PsbY, PsbZ, Psb30/Ycf12, at least 3 peripheral proteins of the oxygen-evolving complex and a large number of cofactors. It forms dimeric complexes.</text>
</comment>
<comment type="subcellular location">
    <subcellularLocation>
        <location evidence="1">Plastid</location>
        <location evidence="1">Chloroplast thylakoid membrane</location>
        <topology evidence="1">Single-pass membrane protein</topology>
    </subcellularLocation>
</comment>
<comment type="similarity">
    <text evidence="1">Belongs to the PsbE/PsbF family.</text>
</comment>
<gene>
    <name evidence="1" type="primary">psbF</name>
</gene>
<organism>
    <name type="scientific">Piper cenocladum</name>
    <name type="common">Ant piper</name>
    <dbReference type="NCBI Taxonomy" id="398741"/>
    <lineage>
        <taxon>Eukaryota</taxon>
        <taxon>Viridiplantae</taxon>
        <taxon>Streptophyta</taxon>
        <taxon>Embryophyta</taxon>
        <taxon>Tracheophyta</taxon>
        <taxon>Spermatophyta</taxon>
        <taxon>Magnoliopsida</taxon>
        <taxon>Magnoliidae</taxon>
        <taxon>Piperales</taxon>
        <taxon>Piperaceae</taxon>
        <taxon>Piper</taxon>
    </lineage>
</organism>
<accession>Q06GP4</accession>
<proteinExistence type="inferred from homology"/>
<dbReference type="EMBL" id="DQ887677">
    <property type="protein sequence ID" value="ABI14488.1"/>
    <property type="molecule type" value="Genomic_DNA"/>
</dbReference>
<dbReference type="RefSeq" id="YP_784489.1">
    <property type="nucleotide sequence ID" value="NC_008457.1"/>
</dbReference>
<dbReference type="SMR" id="Q06GP4"/>
<dbReference type="GeneID" id="4363672"/>
<dbReference type="GO" id="GO:0009535">
    <property type="term" value="C:chloroplast thylakoid membrane"/>
    <property type="evidence" value="ECO:0007669"/>
    <property type="project" value="UniProtKB-SubCell"/>
</dbReference>
<dbReference type="GO" id="GO:0009539">
    <property type="term" value="C:photosystem II reaction center"/>
    <property type="evidence" value="ECO:0007669"/>
    <property type="project" value="InterPro"/>
</dbReference>
<dbReference type="GO" id="GO:0009055">
    <property type="term" value="F:electron transfer activity"/>
    <property type="evidence" value="ECO:0007669"/>
    <property type="project" value="UniProtKB-UniRule"/>
</dbReference>
<dbReference type="GO" id="GO:0020037">
    <property type="term" value="F:heme binding"/>
    <property type="evidence" value="ECO:0007669"/>
    <property type="project" value="InterPro"/>
</dbReference>
<dbReference type="GO" id="GO:0005506">
    <property type="term" value="F:iron ion binding"/>
    <property type="evidence" value="ECO:0007669"/>
    <property type="project" value="UniProtKB-UniRule"/>
</dbReference>
<dbReference type="GO" id="GO:0009767">
    <property type="term" value="P:photosynthetic electron transport chain"/>
    <property type="evidence" value="ECO:0007669"/>
    <property type="project" value="InterPro"/>
</dbReference>
<dbReference type="HAMAP" id="MF_00643">
    <property type="entry name" value="PSII_PsbF"/>
    <property type="match status" value="1"/>
</dbReference>
<dbReference type="InterPro" id="IPR006241">
    <property type="entry name" value="PSII_cyt_b559_bsu"/>
</dbReference>
<dbReference type="InterPro" id="IPR006216">
    <property type="entry name" value="PSII_cyt_b559_CS"/>
</dbReference>
<dbReference type="InterPro" id="IPR013081">
    <property type="entry name" value="PSII_cyt_b559_N"/>
</dbReference>
<dbReference type="NCBIfam" id="TIGR01333">
    <property type="entry name" value="cyt_b559_beta"/>
    <property type="match status" value="1"/>
</dbReference>
<dbReference type="Pfam" id="PF00283">
    <property type="entry name" value="Cytochrom_B559"/>
    <property type="match status" value="1"/>
</dbReference>
<dbReference type="PIRSF" id="PIRSF000037">
    <property type="entry name" value="PsbF"/>
    <property type="match status" value="1"/>
</dbReference>
<dbReference type="SUPFAM" id="SSF161045">
    <property type="entry name" value="Cytochrome b559 subunits"/>
    <property type="match status" value="1"/>
</dbReference>
<dbReference type="PROSITE" id="PS00537">
    <property type="entry name" value="CYTOCHROME_B559"/>
    <property type="match status" value="1"/>
</dbReference>
<sequence length="39" mass="4424">MTIDRTYPIFTVRWLAVHGLAVPTVSFLGSISAMQFIQR</sequence>
<reference key="1">
    <citation type="journal article" date="2006" name="BMC Evol. Biol.">
        <title>Complete plastid genome sequences of Drimys, Liriodendron, and Piper: implications for the phylogenetic relationships of magnoliids.</title>
        <authorList>
            <person name="Cai Z."/>
            <person name="Penaflor C."/>
            <person name="Kuehl J.V."/>
            <person name="Leebens-Mack J."/>
            <person name="Carlson J.E."/>
            <person name="dePamphilis C.W."/>
            <person name="Boore J.L."/>
            <person name="Jansen R.K."/>
        </authorList>
    </citation>
    <scope>NUCLEOTIDE SEQUENCE [LARGE SCALE GENOMIC DNA]</scope>
</reference>
<name>PSBF_PIPCE</name>
<feature type="chain" id="PRO_0000275737" description="Cytochrome b559 subunit beta">
    <location>
        <begin position="1"/>
        <end position="39"/>
    </location>
</feature>
<feature type="transmembrane region" description="Helical" evidence="1">
    <location>
        <begin position="14"/>
        <end position="30"/>
    </location>
</feature>
<feature type="binding site" description="axial binding residue" evidence="1">
    <location>
        <position position="18"/>
    </location>
    <ligand>
        <name>heme</name>
        <dbReference type="ChEBI" id="CHEBI:30413"/>
        <note>ligand shared with alpha subunit</note>
    </ligand>
    <ligandPart>
        <name>Fe</name>
        <dbReference type="ChEBI" id="CHEBI:18248"/>
    </ligandPart>
</feature>
<geneLocation type="chloroplast"/>